<evidence type="ECO:0000250" key="1"/>
<evidence type="ECO:0000250" key="2">
    <source>
        <dbReference type="UniProtKB" id="P52756"/>
    </source>
</evidence>
<evidence type="ECO:0000255" key="3">
    <source>
        <dbReference type="PROSITE-ProRule" id="PRU00042"/>
    </source>
</evidence>
<evidence type="ECO:0000255" key="4">
    <source>
        <dbReference type="PROSITE-ProRule" id="PRU00092"/>
    </source>
</evidence>
<evidence type="ECO:0000255" key="5">
    <source>
        <dbReference type="PROSITE-ProRule" id="PRU00176"/>
    </source>
</evidence>
<evidence type="ECO:0000255" key="6">
    <source>
        <dbReference type="PROSITE-ProRule" id="PRU00322"/>
    </source>
</evidence>
<evidence type="ECO:0000256" key="7">
    <source>
        <dbReference type="SAM" id="MobiDB-lite"/>
    </source>
</evidence>
<evidence type="ECO:0000305" key="8"/>
<organism>
    <name type="scientific">Bos taurus</name>
    <name type="common">Bovine</name>
    <dbReference type="NCBI Taxonomy" id="9913"/>
    <lineage>
        <taxon>Eukaryota</taxon>
        <taxon>Metazoa</taxon>
        <taxon>Chordata</taxon>
        <taxon>Craniata</taxon>
        <taxon>Vertebrata</taxon>
        <taxon>Euteleostomi</taxon>
        <taxon>Mammalia</taxon>
        <taxon>Eutheria</taxon>
        <taxon>Laurasiatheria</taxon>
        <taxon>Artiodactyla</taxon>
        <taxon>Ruminantia</taxon>
        <taxon>Pecora</taxon>
        <taxon>Bovidae</taxon>
        <taxon>Bovinae</taxon>
        <taxon>Bos</taxon>
    </lineage>
</organism>
<name>RBM5_BOVIN</name>
<feature type="chain" id="PRO_0000253049" description="RNA-binding protein 5">
    <location>
        <begin position="1"/>
        <end position="815"/>
    </location>
</feature>
<feature type="domain" description="RRM 1" evidence="5">
    <location>
        <begin position="98"/>
        <end position="178"/>
    </location>
</feature>
<feature type="domain" description="RRM 2" evidence="5">
    <location>
        <begin position="231"/>
        <end position="315"/>
    </location>
</feature>
<feature type="domain" description="G-patch" evidence="4">
    <location>
        <begin position="743"/>
        <end position="789"/>
    </location>
</feature>
<feature type="zinc finger region" description="RanBP2-type" evidence="6">
    <location>
        <begin position="181"/>
        <end position="210"/>
    </location>
</feature>
<feature type="zinc finger region" description="C2H2-type" evidence="3">
    <location>
        <begin position="647"/>
        <end position="672"/>
    </location>
</feature>
<feature type="region of interest" description="Disordered" evidence="7">
    <location>
        <begin position="1"/>
        <end position="93"/>
    </location>
</feature>
<feature type="region of interest" description="Required for interaction with U2AF2" evidence="1">
    <location>
        <begin position="321"/>
        <end position="809"/>
    </location>
</feature>
<feature type="region of interest" description="Disordered" evidence="7">
    <location>
        <begin position="411"/>
        <end position="467"/>
    </location>
</feature>
<feature type="region of interest" description="Sufficient for interaction with ACIN1, PRPF8, SFRS3, SNRPB, SNRPN, SNRNP70 and SNRNP200" evidence="1">
    <location>
        <begin position="452"/>
        <end position="535"/>
    </location>
</feature>
<feature type="region of interest" description="Disordered" evidence="7">
    <location>
        <begin position="510"/>
        <end position="539"/>
    </location>
</feature>
<feature type="compositionally biased region" description="Polar residues" evidence="7">
    <location>
        <begin position="411"/>
        <end position="421"/>
    </location>
</feature>
<feature type="compositionally biased region" description="Low complexity" evidence="7">
    <location>
        <begin position="426"/>
        <end position="446"/>
    </location>
</feature>
<feature type="modified residue" description="Phosphoserine" evidence="2">
    <location>
        <position position="18"/>
    </location>
</feature>
<feature type="modified residue" description="Phosphoserine" evidence="2">
    <location>
        <position position="59"/>
    </location>
</feature>
<feature type="modified residue" description="Phosphoserine" evidence="2">
    <location>
        <position position="69"/>
    </location>
</feature>
<feature type="modified residue" description="Phosphoserine" evidence="2">
    <location>
        <position position="72"/>
    </location>
</feature>
<feature type="modified residue" description="Phosphoserine" evidence="2">
    <location>
        <position position="78"/>
    </location>
</feature>
<feature type="modified residue" description="Phosphoserine" evidence="2">
    <location>
        <position position="444"/>
    </location>
</feature>
<feature type="modified residue" description="Phosphoserine" evidence="2">
    <location>
        <position position="621"/>
    </location>
</feature>
<feature type="modified residue" description="Phosphoserine" evidence="2">
    <location>
        <position position="624"/>
    </location>
</feature>
<proteinExistence type="evidence at transcript level"/>
<protein>
    <recommendedName>
        <fullName>RNA-binding protein 5</fullName>
    </recommendedName>
    <alternativeName>
        <fullName>Putative tumor suppressor LUCA15</fullName>
    </alternativeName>
    <alternativeName>
        <fullName>RNA-binding motif protein 5</fullName>
    </alternativeName>
</protein>
<gene>
    <name type="primary">RBM5</name>
    <name type="synonym">LUCA15</name>
</gene>
<sequence>MGSDKRVSRTERSGRYGSIIDRDDRDERESRSRRRDSDYKRSSDDRRGDRYDDYRDYDSPERERERRNSDRSEDGYHSDGDYGEHDYRHDISDERESKTIMLRGLPITITESDIREMMESFEGPQPADVRLMKRKTGVSRGFAFVEFYHLQDATSWMEANQKKLVIQGKHIAMHYSNPRPKFEDWLCNKCCLNNFRKRLKCFRCGADKFDSEQEVPPGTTESVQSVDYYCDTIILRNIAPHTVVDSIMTALSPYASLAVNNIRLIKDKQTQQNRGFAFVQLSSAMDASQLLQILQSLHPPLKIDGKTIGVDFAKSARKDLVLPDGNRVSAFSVASTAIAAAQWSSTQSQSGEGGSVDYSYLQPGQDGYAQYAQYSQDYQQFYQQQAGGLESDASSASGTAVTTTSAAVVSQSPQLYNQTSNPPSSPTEEAQPSTSTSTQAPAASPTGVVPGTKYAVPDTSTYQYDESSGYYYDPTTGLYYDPNSQYYYNSLTQQYLYWDGEKETYMLAAESNSHQQTGLPPAKEGKEKKEKPKSKTAQQIAKDMERWAKSLNKQKENFKNSFQPVNSLREEERRESAAADAGFALFEKKGALAERQQLIPELVRNGDEDNPLKRGLVAAYSGDSDNEEELVERLESEEEKLADWKKMACLLCRRQFPNKDALVRHQQLSDLHKQNMDIYRRSRLSEQELEALELREREMKYRDRAAERREKYGIPEPPEPKRKKQFDAGTVNYEQPTKDGIDHSNIGNKMLQAMGWREGSGLGRKCQGITAPIEAQVRLKGAGLGAKGSAYGLSGADSYKDAVRKAMFARFTEME</sequence>
<dbReference type="EMBL" id="BC114706">
    <property type="protein sequence ID" value="AAI14707.1"/>
    <property type="molecule type" value="mRNA"/>
</dbReference>
<dbReference type="RefSeq" id="NP_001039839.1">
    <property type="nucleotide sequence ID" value="NM_001046374.1"/>
</dbReference>
<dbReference type="BMRB" id="Q1RMU5"/>
<dbReference type="FunCoup" id="Q1RMU5">
    <property type="interactions" value="5577"/>
</dbReference>
<dbReference type="STRING" id="9913.ENSBTAP00000008305"/>
<dbReference type="PaxDb" id="9913-ENSBTAP00000008305"/>
<dbReference type="Ensembl" id="ENSBTAT00000008305.5">
    <property type="protein sequence ID" value="ENSBTAP00000008305.3"/>
    <property type="gene ID" value="ENSBTAG00000006330.6"/>
</dbReference>
<dbReference type="GeneID" id="534216"/>
<dbReference type="KEGG" id="bta:534216"/>
<dbReference type="CTD" id="10181"/>
<dbReference type="VEuPathDB" id="HostDB:ENSBTAG00000006330"/>
<dbReference type="VGNC" id="VGNC:33806">
    <property type="gene designation" value="RBM5"/>
</dbReference>
<dbReference type="eggNOG" id="KOG0154">
    <property type="taxonomic scope" value="Eukaryota"/>
</dbReference>
<dbReference type="GeneTree" id="ENSGT00940000156617"/>
<dbReference type="HOGENOM" id="CLU_010527_0_0_1"/>
<dbReference type="InParanoid" id="Q1RMU5"/>
<dbReference type="OMA" id="MYDDRSP"/>
<dbReference type="OrthoDB" id="29221at2759"/>
<dbReference type="TreeFam" id="TF315789"/>
<dbReference type="Proteomes" id="UP000009136">
    <property type="component" value="Chromosome 22"/>
</dbReference>
<dbReference type="Bgee" id="ENSBTAG00000006330">
    <property type="expression patterns" value="Expressed in uterine horn and 106 other cell types or tissues"/>
</dbReference>
<dbReference type="GO" id="GO:0005634">
    <property type="term" value="C:nucleus"/>
    <property type="evidence" value="ECO:0000250"/>
    <property type="project" value="UniProtKB"/>
</dbReference>
<dbReference type="GO" id="GO:0005681">
    <property type="term" value="C:spliceosomal complex"/>
    <property type="evidence" value="ECO:0007669"/>
    <property type="project" value="UniProtKB-KW"/>
</dbReference>
<dbReference type="GO" id="GO:0003729">
    <property type="term" value="F:mRNA binding"/>
    <property type="evidence" value="ECO:0000250"/>
    <property type="project" value="UniProtKB"/>
</dbReference>
<dbReference type="GO" id="GO:0003723">
    <property type="term" value="F:RNA binding"/>
    <property type="evidence" value="ECO:0000318"/>
    <property type="project" value="GO_Central"/>
</dbReference>
<dbReference type="GO" id="GO:0008270">
    <property type="term" value="F:zinc ion binding"/>
    <property type="evidence" value="ECO:0007669"/>
    <property type="project" value="UniProtKB-KW"/>
</dbReference>
<dbReference type="GO" id="GO:0006915">
    <property type="term" value="P:apoptotic process"/>
    <property type="evidence" value="ECO:0007669"/>
    <property type="project" value="UniProtKB-KW"/>
</dbReference>
<dbReference type="GO" id="GO:0000398">
    <property type="term" value="P:mRNA splicing, via spliceosome"/>
    <property type="evidence" value="ECO:0000318"/>
    <property type="project" value="GO_Central"/>
</dbReference>
<dbReference type="GO" id="GO:0043065">
    <property type="term" value="P:positive regulation of apoptotic process"/>
    <property type="evidence" value="ECO:0000250"/>
    <property type="project" value="UniProtKB"/>
</dbReference>
<dbReference type="GO" id="GO:0000381">
    <property type="term" value="P:regulation of alternative mRNA splicing, via spliceosome"/>
    <property type="evidence" value="ECO:0000250"/>
    <property type="project" value="UniProtKB"/>
</dbReference>
<dbReference type="GO" id="GO:0000245">
    <property type="term" value="P:spliceosomal complex assembly"/>
    <property type="evidence" value="ECO:0000250"/>
    <property type="project" value="UniProtKB"/>
</dbReference>
<dbReference type="CDD" id="cd12752">
    <property type="entry name" value="RRM1_RBM5"/>
    <property type="match status" value="1"/>
</dbReference>
<dbReference type="CDD" id="cd12755">
    <property type="entry name" value="RRM2_RBM5"/>
    <property type="match status" value="1"/>
</dbReference>
<dbReference type="FunFam" id="3.30.70.330:FF:000515">
    <property type="entry name" value="RNA-binding motif protein 5"/>
    <property type="match status" value="1"/>
</dbReference>
<dbReference type="FunFam" id="3.30.70.330:FF:000114">
    <property type="entry name" value="RNA-binding protein 10 isoform X1"/>
    <property type="match status" value="1"/>
</dbReference>
<dbReference type="Gene3D" id="3.30.70.330">
    <property type="match status" value="2"/>
</dbReference>
<dbReference type="Gene3D" id="4.10.1060.10">
    <property type="entry name" value="Zinc finger, RanBP2-type"/>
    <property type="match status" value="1"/>
</dbReference>
<dbReference type="InterPro" id="IPR000467">
    <property type="entry name" value="G_patch_dom"/>
</dbReference>
<dbReference type="InterPro" id="IPR012677">
    <property type="entry name" value="Nucleotide-bd_a/b_plait_sf"/>
</dbReference>
<dbReference type="InterPro" id="IPR041591">
    <property type="entry name" value="OCRE"/>
</dbReference>
<dbReference type="InterPro" id="IPR035979">
    <property type="entry name" value="RBD_domain_sf"/>
</dbReference>
<dbReference type="InterPro" id="IPR034991">
    <property type="entry name" value="RBM5_RRM1"/>
</dbReference>
<dbReference type="InterPro" id="IPR034993">
    <property type="entry name" value="RBM5_RRM2"/>
</dbReference>
<dbReference type="InterPro" id="IPR000504">
    <property type="entry name" value="RRM_dom"/>
</dbReference>
<dbReference type="InterPro" id="IPR013087">
    <property type="entry name" value="Znf_C2H2_type"/>
</dbReference>
<dbReference type="InterPro" id="IPR001876">
    <property type="entry name" value="Znf_RanBP2"/>
</dbReference>
<dbReference type="InterPro" id="IPR036443">
    <property type="entry name" value="Znf_RanBP2_sf"/>
</dbReference>
<dbReference type="PANTHER" id="PTHR13948">
    <property type="entry name" value="RNA-BINDING PROTEIN"/>
    <property type="match status" value="1"/>
</dbReference>
<dbReference type="PANTHER" id="PTHR13948:SF21">
    <property type="entry name" value="RNA-BINDING PROTEIN 5"/>
    <property type="match status" value="1"/>
</dbReference>
<dbReference type="Pfam" id="PF01585">
    <property type="entry name" value="G-patch"/>
    <property type="match status" value="1"/>
</dbReference>
<dbReference type="Pfam" id="PF17780">
    <property type="entry name" value="OCRE"/>
    <property type="match status" value="1"/>
</dbReference>
<dbReference type="Pfam" id="PF00076">
    <property type="entry name" value="RRM_1"/>
    <property type="match status" value="2"/>
</dbReference>
<dbReference type="Pfam" id="PF00641">
    <property type="entry name" value="Zn_ribbon_RanBP"/>
    <property type="match status" value="1"/>
</dbReference>
<dbReference type="SMART" id="SM00443">
    <property type="entry name" value="G_patch"/>
    <property type="match status" value="1"/>
</dbReference>
<dbReference type="SMART" id="SM00360">
    <property type="entry name" value="RRM"/>
    <property type="match status" value="2"/>
</dbReference>
<dbReference type="SMART" id="SM00547">
    <property type="entry name" value="ZnF_RBZ"/>
    <property type="match status" value="1"/>
</dbReference>
<dbReference type="SUPFAM" id="SSF90209">
    <property type="entry name" value="Ran binding protein zinc finger-like"/>
    <property type="match status" value="1"/>
</dbReference>
<dbReference type="SUPFAM" id="SSF54928">
    <property type="entry name" value="RNA-binding domain, RBD"/>
    <property type="match status" value="2"/>
</dbReference>
<dbReference type="PROSITE" id="PS50174">
    <property type="entry name" value="G_PATCH"/>
    <property type="match status" value="1"/>
</dbReference>
<dbReference type="PROSITE" id="PS50102">
    <property type="entry name" value="RRM"/>
    <property type="match status" value="2"/>
</dbReference>
<dbReference type="PROSITE" id="PS01358">
    <property type="entry name" value="ZF_RANBP2_1"/>
    <property type="match status" value="1"/>
</dbReference>
<dbReference type="PROSITE" id="PS50199">
    <property type="entry name" value="ZF_RANBP2_2"/>
    <property type="match status" value="1"/>
</dbReference>
<dbReference type="PROSITE" id="PS50157">
    <property type="entry name" value="ZINC_FINGER_C2H2_2"/>
    <property type="match status" value="1"/>
</dbReference>
<reference key="1">
    <citation type="submission" date="2006-04" db="EMBL/GenBank/DDBJ databases">
        <authorList>
            <consortium name="NIH - Mammalian Gene Collection (MGC) project"/>
        </authorList>
    </citation>
    <scope>NUCLEOTIDE SEQUENCE [LARGE SCALE MRNA]</scope>
    <source>
        <strain>Hereford</strain>
        <tissue>Uterus</tissue>
    </source>
</reference>
<comment type="function">
    <text evidence="2">Component of the spliceosome A complex. Binds to ssRNA containing the consensus sequence 5'-AGGUAA-3' (By similarity). Regulates alternative splicing of a number of mRNAs. May modulate splice site pairing after recruitment of the U1 and U2 snRNPs to the 5' and 3' splice sites of the intron. May both positively and negatively regulate apoptosis by regulating the alternative splicing of several genes involved in this process, including FAS and CASP2/caspase-2. In the case of FAS, promotes production of a soluble form of FAS that inhibits apoptosis. In the case of CASP2/caspase-2, promotes production of a catalytically active form of CASP2/Caspase-2 that induces apoptosis (By similarity).</text>
</comment>
<comment type="subunit">
    <text evidence="1">Component of the spliceosome A complex (also known as the prespliceosome). Appears to dissociate from the spliceosome upon formation of the spliceosome B complex (also known as the precatalytic spliceosome), in which the heterotrimeric U4/U6.U5 snRNPs are bound. Interacts with U2AF2; this interaction is direct. Also interacts with ACIN1, PRPF8, SFRS3, SNRPB, SNRPN, SNRNP70 and SNRNP200; these interactions may be indirect (By similarity).</text>
</comment>
<comment type="subcellular location">
    <subcellularLocation>
        <location evidence="1">Nucleus</location>
    </subcellularLocation>
</comment>
<comment type="similarity">
    <text evidence="8">Belongs to the RBM5/RBM10 family.</text>
</comment>
<keyword id="KW-0053">Apoptosis</keyword>
<keyword id="KW-0479">Metal-binding</keyword>
<keyword id="KW-0507">mRNA processing</keyword>
<keyword id="KW-0508">mRNA splicing</keyword>
<keyword id="KW-0539">Nucleus</keyword>
<keyword id="KW-0597">Phosphoprotein</keyword>
<keyword id="KW-1185">Reference proteome</keyword>
<keyword id="KW-0677">Repeat</keyword>
<keyword id="KW-0694">RNA-binding</keyword>
<keyword id="KW-0747">Spliceosome</keyword>
<keyword id="KW-0862">Zinc</keyword>
<keyword id="KW-0863">Zinc-finger</keyword>
<accession>Q1RMU5</accession>